<organism>
    <name type="scientific">Sambucus nigra</name>
    <name type="common">European elder</name>
    <dbReference type="NCBI Taxonomy" id="4202"/>
    <lineage>
        <taxon>Eukaryota</taxon>
        <taxon>Viridiplantae</taxon>
        <taxon>Streptophyta</taxon>
        <taxon>Embryophyta</taxon>
        <taxon>Tracheophyta</taxon>
        <taxon>Spermatophyta</taxon>
        <taxon>Magnoliopsida</taxon>
        <taxon>eudicotyledons</taxon>
        <taxon>Gunneridae</taxon>
        <taxon>Pentapetalae</taxon>
        <taxon>asterids</taxon>
        <taxon>campanulids</taxon>
        <taxon>Dipsacales</taxon>
        <taxon>Adoxaceae</taxon>
        <taxon>Sambucus</taxon>
    </lineage>
</organism>
<sequence>MAHNHWCNLFSVALVCVVALVMVQYSVAQNSPQDYVDAHNAARSAVNVGPVTWDESVAAFARQYAQSRAGDCRLVHSGDPRYGENLAFGSGFELTGRNAVDMWVAERNDYNPNTNTCAPGKVCGHYTQVVWRNSVRIGCARVRCNNGAWFITCNYSPPGNYAGQRPY</sequence>
<reference key="1">
    <citation type="submission" date="1994-12" db="EMBL/GenBank/DDBJ databases">
        <authorList>
            <person name="Coupe S.A."/>
            <person name="Taylor J.E."/>
            <person name="Roberts J.A."/>
        </authorList>
    </citation>
    <scope>NUCLEOTIDE SEQUENCE [MRNA]</scope>
    <source>
        <tissue>Abscission zone</tissue>
    </source>
</reference>
<protein>
    <recommendedName>
        <fullName>Pathogenesis-related protein PR-1 type</fullName>
    </recommendedName>
</protein>
<feature type="signal peptide" evidence="2">
    <location>
        <begin position="1"/>
        <end position="29"/>
    </location>
</feature>
<feature type="chain" id="PRO_0000006313" description="Pathogenesis-related protein PR-1 type">
    <location>
        <begin position="30"/>
        <end position="167"/>
    </location>
</feature>
<feature type="domain" description="SCP">
    <location>
        <begin position="36"/>
        <end position="155"/>
    </location>
</feature>
<feature type="disulfide bond" evidence="1">
    <location>
        <begin position="72"/>
        <end position="144"/>
    </location>
</feature>
<feature type="disulfide bond" evidence="1">
    <location>
        <begin position="117"/>
        <end position="123"/>
    </location>
</feature>
<feature type="disulfide bond" evidence="1">
    <location>
        <begin position="139"/>
        <end position="153"/>
    </location>
</feature>
<name>PR1_SAMNI</name>
<accession>Q41359</accession>
<proteinExistence type="evidence at transcript level"/>
<keyword id="KW-1015">Disulfide bond</keyword>
<keyword id="KW-0568">Pathogenesis-related protein</keyword>
<keyword id="KW-0611">Plant defense</keyword>
<keyword id="KW-0732">Signal</keyword>
<comment type="function">
    <text>Probably involved in the defense reaction of plants against pathogens.</text>
</comment>
<comment type="similarity">
    <text evidence="3">Belongs to the CRISP family.</text>
</comment>
<evidence type="ECO:0000250" key="1"/>
<evidence type="ECO:0000255" key="2"/>
<evidence type="ECO:0000305" key="3"/>
<dbReference type="EMBL" id="Z46947">
    <property type="protein sequence ID" value="CAA87071.1"/>
    <property type="molecule type" value="mRNA"/>
</dbReference>
<dbReference type="PIR" id="S51679">
    <property type="entry name" value="S51679"/>
</dbReference>
<dbReference type="SMR" id="Q41359"/>
<dbReference type="GO" id="GO:0005576">
    <property type="term" value="C:extracellular region"/>
    <property type="evidence" value="ECO:0007669"/>
    <property type="project" value="InterPro"/>
</dbReference>
<dbReference type="GO" id="GO:0006952">
    <property type="term" value="P:defense response"/>
    <property type="evidence" value="ECO:0007669"/>
    <property type="project" value="UniProtKB-KW"/>
</dbReference>
<dbReference type="CDD" id="cd05381">
    <property type="entry name" value="CAP_PR-1"/>
    <property type="match status" value="1"/>
</dbReference>
<dbReference type="FunFam" id="3.40.33.10:FF:000006">
    <property type="entry name" value="Putative pathogenesis-related protein 1"/>
    <property type="match status" value="1"/>
</dbReference>
<dbReference type="Gene3D" id="3.40.33.10">
    <property type="entry name" value="CAP"/>
    <property type="match status" value="1"/>
</dbReference>
<dbReference type="InterPro" id="IPR018244">
    <property type="entry name" value="Allrgn_V5/Tpx1_CS"/>
</dbReference>
<dbReference type="InterPro" id="IPR014044">
    <property type="entry name" value="CAP_dom"/>
</dbReference>
<dbReference type="InterPro" id="IPR035940">
    <property type="entry name" value="CAP_sf"/>
</dbReference>
<dbReference type="InterPro" id="IPR001283">
    <property type="entry name" value="CRISP-related"/>
</dbReference>
<dbReference type="PANTHER" id="PTHR10334">
    <property type="entry name" value="CYSTEINE-RICH SECRETORY PROTEIN-RELATED"/>
    <property type="match status" value="1"/>
</dbReference>
<dbReference type="Pfam" id="PF00188">
    <property type="entry name" value="CAP"/>
    <property type="match status" value="1"/>
</dbReference>
<dbReference type="PRINTS" id="PR00837">
    <property type="entry name" value="V5TPXLIKE"/>
</dbReference>
<dbReference type="SMART" id="SM00198">
    <property type="entry name" value="SCP"/>
    <property type="match status" value="1"/>
</dbReference>
<dbReference type="SUPFAM" id="SSF55797">
    <property type="entry name" value="PR-1-like"/>
    <property type="match status" value="1"/>
</dbReference>
<dbReference type="PROSITE" id="PS01009">
    <property type="entry name" value="CRISP_1"/>
    <property type="match status" value="1"/>
</dbReference>
<dbReference type="PROSITE" id="PS01010">
    <property type="entry name" value="CRISP_2"/>
    <property type="match status" value="1"/>
</dbReference>